<organism>
    <name type="scientific">Encephalitozoon cuniculi (strain GB-M1)</name>
    <name type="common">Microsporidian parasite</name>
    <dbReference type="NCBI Taxonomy" id="284813"/>
    <lineage>
        <taxon>Eukaryota</taxon>
        <taxon>Fungi</taxon>
        <taxon>Fungi incertae sedis</taxon>
        <taxon>Microsporidia</taxon>
        <taxon>Unikaryonidae</taxon>
        <taxon>Encephalitozoon</taxon>
    </lineage>
</organism>
<protein>
    <recommendedName>
        <fullName>UPF0329 protein ECU06_0050</fullName>
    </recommendedName>
</protein>
<accession>Q8SVF7</accession>
<sequence length="158" mass="17732">MIGRMVGLEPSSRSGVLEECRECRAIVMKGDGVQTPLHKGDSILGGEGACLMRYAAWTLISAVDVVYCSLETRESVSLTFNPDGQVIVVPFMFKGYNIAALPTTKFGDLKKDTKQIENVVSFLRSDICYAVWEFLVSSVQYKDDDRFERLFDERMRGI</sequence>
<comment type="similarity">
    <text evidence="1">Belongs to the UPF0329 family.</text>
</comment>
<reference key="1">
    <citation type="journal article" date="2001" name="Nature">
        <title>Genome sequence and gene compaction of the eukaryote parasite Encephalitozoon cuniculi.</title>
        <authorList>
            <person name="Katinka M.D."/>
            <person name="Duprat S."/>
            <person name="Cornillot E."/>
            <person name="Metenier G."/>
            <person name="Thomarat F."/>
            <person name="Prensier G."/>
            <person name="Barbe V."/>
            <person name="Peyretaillade E."/>
            <person name="Brottier P."/>
            <person name="Wincker P."/>
            <person name="Delbac F."/>
            <person name="El Alaoui H."/>
            <person name="Peyret P."/>
            <person name="Saurin W."/>
            <person name="Gouy M."/>
            <person name="Weissenbach J."/>
            <person name="Vivares C.P."/>
        </authorList>
    </citation>
    <scope>NUCLEOTIDE SEQUENCE [LARGE SCALE GENOMIC DNA]</scope>
    <source>
        <strain>GB-M1</strain>
    </source>
</reference>
<proteinExistence type="inferred from homology"/>
<keyword id="KW-1185">Reference proteome</keyword>
<evidence type="ECO:0000305" key="1"/>
<name>Y605_ENCCU</name>
<feature type="chain" id="PRO_0000223162" description="UPF0329 protein ECU06_0050">
    <location>
        <begin position="1"/>
        <end position="158"/>
    </location>
</feature>
<dbReference type="EMBL" id="AL590446">
    <property type="protein sequence ID" value="CAD25365.1"/>
    <property type="molecule type" value="Genomic_DNA"/>
</dbReference>
<dbReference type="RefSeq" id="NP_585761.1">
    <property type="nucleotide sequence ID" value="NM_001041383.1"/>
</dbReference>
<dbReference type="GeneID" id="859184"/>
<dbReference type="KEGG" id="ecu:ECU06_0050"/>
<dbReference type="VEuPathDB" id="MicrosporidiaDB:ECU06_0050"/>
<dbReference type="HOGENOM" id="CLU_118192_0_0_1"/>
<dbReference type="InParanoid" id="Q8SVF7"/>
<dbReference type="OrthoDB" id="2162691at2759"/>
<dbReference type="Proteomes" id="UP000000819">
    <property type="component" value="Chromosome VI"/>
</dbReference>
<gene>
    <name type="ordered locus">ECU06_0050</name>
</gene>